<dbReference type="EC" id="3.5.1.-" evidence="1"/>
<dbReference type="EMBL" id="CP000304">
    <property type="protein sequence ID" value="ABP81228.1"/>
    <property type="molecule type" value="Genomic_DNA"/>
</dbReference>
<dbReference type="RefSeq" id="WP_011914622.1">
    <property type="nucleotide sequence ID" value="NC_009434.1"/>
</dbReference>
<dbReference type="SMR" id="A4VQH7"/>
<dbReference type="ESTHER" id="pseu5-a4vqh7">
    <property type="family name" value="RutD"/>
</dbReference>
<dbReference type="KEGG" id="psa:PST_3600"/>
<dbReference type="eggNOG" id="COG0596">
    <property type="taxonomic scope" value="Bacteria"/>
</dbReference>
<dbReference type="HOGENOM" id="CLU_020336_50_1_6"/>
<dbReference type="Proteomes" id="UP000000233">
    <property type="component" value="Chromosome"/>
</dbReference>
<dbReference type="GO" id="GO:0016020">
    <property type="term" value="C:membrane"/>
    <property type="evidence" value="ECO:0007669"/>
    <property type="project" value="TreeGrafter"/>
</dbReference>
<dbReference type="GO" id="GO:0016811">
    <property type="term" value="F:hydrolase activity, acting on carbon-nitrogen (but not peptide) bonds, in linear amides"/>
    <property type="evidence" value="ECO:0007669"/>
    <property type="project" value="InterPro"/>
</dbReference>
<dbReference type="GO" id="GO:0019740">
    <property type="term" value="P:nitrogen utilization"/>
    <property type="evidence" value="ECO:0007669"/>
    <property type="project" value="UniProtKB-UniRule"/>
</dbReference>
<dbReference type="GO" id="GO:0006212">
    <property type="term" value="P:uracil catabolic process"/>
    <property type="evidence" value="ECO:0007669"/>
    <property type="project" value="UniProtKB-UniRule"/>
</dbReference>
<dbReference type="Gene3D" id="3.40.50.1820">
    <property type="entry name" value="alpha/beta hydrolase"/>
    <property type="match status" value="1"/>
</dbReference>
<dbReference type="HAMAP" id="MF_00832">
    <property type="entry name" value="RutD"/>
    <property type="match status" value="1"/>
</dbReference>
<dbReference type="InterPro" id="IPR000073">
    <property type="entry name" value="AB_hydrolase_1"/>
</dbReference>
<dbReference type="InterPro" id="IPR029058">
    <property type="entry name" value="AB_hydrolase_fold"/>
</dbReference>
<dbReference type="InterPro" id="IPR050266">
    <property type="entry name" value="AB_hydrolase_sf"/>
</dbReference>
<dbReference type="InterPro" id="IPR019913">
    <property type="entry name" value="Pyrimidine_utilisation_RutD"/>
</dbReference>
<dbReference type="NCBIfam" id="TIGR03611">
    <property type="entry name" value="RutD"/>
    <property type="match status" value="1"/>
</dbReference>
<dbReference type="PANTHER" id="PTHR43798:SF31">
    <property type="entry name" value="AB HYDROLASE SUPERFAMILY PROTEIN YCLE"/>
    <property type="match status" value="1"/>
</dbReference>
<dbReference type="PANTHER" id="PTHR43798">
    <property type="entry name" value="MONOACYLGLYCEROL LIPASE"/>
    <property type="match status" value="1"/>
</dbReference>
<dbReference type="Pfam" id="PF00561">
    <property type="entry name" value="Abhydrolase_1"/>
    <property type="match status" value="1"/>
</dbReference>
<dbReference type="PRINTS" id="PR00111">
    <property type="entry name" value="ABHYDROLASE"/>
</dbReference>
<dbReference type="SUPFAM" id="SSF53474">
    <property type="entry name" value="alpha/beta-Hydrolases"/>
    <property type="match status" value="1"/>
</dbReference>
<feature type="chain" id="PRO_0000402977" description="Putative carbamate hydrolase RutD">
    <location>
        <begin position="1"/>
        <end position="265"/>
    </location>
</feature>
<feature type="domain" description="AB hydrolase-1" evidence="1">
    <location>
        <begin position="14"/>
        <end position="123"/>
    </location>
</feature>
<organism>
    <name type="scientific">Stutzerimonas stutzeri (strain A1501)</name>
    <name type="common">Pseudomonas stutzeri</name>
    <dbReference type="NCBI Taxonomy" id="379731"/>
    <lineage>
        <taxon>Bacteria</taxon>
        <taxon>Pseudomonadati</taxon>
        <taxon>Pseudomonadota</taxon>
        <taxon>Gammaproteobacteria</taxon>
        <taxon>Pseudomonadales</taxon>
        <taxon>Pseudomonadaceae</taxon>
        <taxon>Stutzerimonas</taxon>
    </lineage>
</organism>
<evidence type="ECO:0000255" key="1">
    <source>
        <dbReference type="HAMAP-Rule" id="MF_00832"/>
    </source>
</evidence>
<gene>
    <name evidence="1" type="primary">rutD</name>
    <name type="ordered locus">PST_3600</name>
</gene>
<protein>
    <recommendedName>
        <fullName evidence="1">Putative carbamate hydrolase RutD</fullName>
        <ecNumber evidence="1">3.5.1.-</ecNumber>
    </recommendedName>
    <alternativeName>
        <fullName evidence="1">Aminohydrolase</fullName>
    </alternativeName>
</protein>
<comment type="function">
    <text evidence="1">Involved in pyrimidine catabolism. May facilitate the hydrolysis of carbamate, a reaction that can also occur spontaneously.</text>
</comment>
<comment type="catalytic activity">
    <reaction evidence="1">
        <text>carbamate + 2 H(+) = NH4(+) + CO2</text>
        <dbReference type="Rhea" id="RHEA:15649"/>
        <dbReference type="ChEBI" id="CHEBI:13941"/>
        <dbReference type="ChEBI" id="CHEBI:15378"/>
        <dbReference type="ChEBI" id="CHEBI:16526"/>
        <dbReference type="ChEBI" id="CHEBI:28938"/>
    </reaction>
</comment>
<comment type="similarity">
    <text evidence="1">Belongs to the AB hydrolase superfamily. Hydrolase RutD family.</text>
</comment>
<reference key="1">
    <citation type="journal article" date="2008" name="Proc. Natl. Acad. Sci. U.S.A.">
        <title>Nitrogen fixation island and rhizosphere competence traits in the genome of root-associated Pseudomonas stutzeri A1501.</title>
        <authorList>
            <person name="Yan Y."/>
            <person name="Yang J."/>
            <person name="Dou Y."/>
            <person name="Chen M."/>
            <person name="Ping S."/>
            <person name="Peng J."/>
            <person name="Lu W."/>
            <person name="Zhang W."/>
            <person name="Yao Z."/>
            <person name="Li H."/>
            <person name="Liu W."/>
            <person name="He S."/>
            <person name="Geng L."/>
            <person name="Zhang X."/>
            <person name="Yang F."/>
            <person name="Yu H."/>
            <person name="Zhan Y."/>
            <person name="Li D."/>
            <person name="Lin Z."/>
            <person name="Wang Y."/>
            <person name="Elmerich C."/>
            <person name="Lin M."/>
            <person name="Jin Q."/>
        </authorList>
    </citation>
    <scope>NUCLEOTIDE SEQUENCE [LARGE SCALE GENOMIC DNA]</scope>
    <source>
        <strain>A1501</strain>
    </source>
</reference>
<keyword id="KW-0378">Hydrolase</keyword>
<keyword id="KW-1185">Reference proteome</keyword>
<accession>A4VQH7</accession>
<sequence length="265" mass="28955">MHYELHGRMEPDAPTLVLSSGLGGAAAFWLPQLPALTQDYRVLVYDQLGTNKSPANLPAGYSIESMAVELLELLDTLGIRRCHFIGHALGGLVGLQIALLRPQLLQSLVPINAWSSPNPHSARCFAVRLKLLHDSGPAAYVQAQSLFLYPADWIAANSERLARDDAHALAHFPPTMNLVRRIEALLAFDIEAELPRITTPTLLIANRDDMLVPWQRSQHLADNMPNAQLALLNYGGHASSVSDSEPFNQILLDHLAEQCGQVAAA</sequence>
<proteinExistence type="inferred from homology"/>
<name>RUTD_STUS1</name>